<keyword id="KW-0963">Cytoplasm</keyword>
<keyword id="KW-0312">Gluconeogenesis</keyword>
<keyword id="KW-0324">Glycolysis</keyword>
<keyword id="KW-0413">Isomerase</keyword>
<organism>
    <name type="scientific">Helicobacter pylori (strain P12)</name>
    <dbReference type="NCBI Taxonomy" id="570508"/>
    <lineage>
        <taxon>Bacteria</taxon>
        <taxon>Pseudomonadati</taxon>
        <taxon>Campylobacterota</taxon>
        <taxon>Epsilonproteobacteria</taxon>
        <taxon>Campylobacterales</taxon>
        <taxon>Helicobacteraceae</taxon>
        <taxon>Helicobacter</taxon>
    </lineage>
</organism>
<dbReference type="EC" id="5.3.1.9" evidence="1"/>
<dbReference type="EMBL" id="CP001217">
    <property type="protein sequence ID" value="ACJ08284.1"/>
    <property type="molecule type" value="Genomic_DNA"/>
</dbReference>
<dbReference type="SMR" id="B6JN06"/>
<dbReference type="KEGG" id="hpp:HPP12_1132"/>
<dbReference type="HOGENOM" id="CLU_017947_3_1_7"/>
<dbReference type="UniPathway" id="UPA00109">
    <property type="reaction ID" value="UER00181"/>
</dbReference>
<dbReference type="UniPathway" id="UPA00138"/>
<dbReference type="Proteomes" id="UP000008198">
    <property type="component" value="Chromosome"/>
</dbReference>
<dbReference type="GO" id="GO:0005829">
    <property type="term" value="C:cytosol"/>
    <property type="evidence" value="ECO:0007669"/>
    <property type="project" value="TreeGrafter"/>
</dbReference>
<dbReference type="GO" id="GO:0097367">
    <property type="term" value="F:carbohydrate derivative binding"/>
    <property type="evidence" value="ECO:0007669"/>
    <property type="project" value="InterPro"/>
</dbReference>
<dbReference type="GO" id="GO:0004347">
    <property type="term" value="F:glucose-6-phosphate isomerase activity"/>
    <property type="evidence" value="ECO:0007669"/>
    <property type="project" value="UniProtKB-UniRule"/>
</dbReference>
<dbReference type="GO" id="GO:0048029">
    <property type="term" value="F:monosaccharide binding"/>
    <property type="evidence" value="ECO:0007669"/>
    <property type="project" value="TreeGrafter"/>
</dbReference>
<dbReference type="GO" id="GO:0006094">
    <property type="term" value="P:gluconeogenesis"/>
    <property type="evidence" value="ECO:0007669"/>
    <property type="project" value="UniProtKB-UniRule"/>
</dbReference>
<dbReference type="GO" id="GO:0051156">
    <property type="term" value="P:glucose 6-phosphate metabolic process"/>
    <property type="evidence" value="ECO:0007669"/>
    <property type="project" value="TreeGrafter"/>
</dbReference>
<dbReference type="GO" id="GO:0006096">
    <property type="term" value="P:glycolytic process"/>
    <property type="evidence" value="ECO:0007669"/>
    <property type="project" value="UniProtKB-UniRule"/>
</dbReference>
<dbReference type="CDD" id="cd05015">
    <property type="entry name" value="SIS_PGI_1"/>
    <property type="match status" value="1"/>
</dbReference>
<dbReference type="CDD" id="cd05016">
    <property type="entry name" value="SIS_PGI_2"/>
    <property type="match status" value="1"/>
</dbReference>
<dbReference type="FunFam" id="1.10.1390.10:FF:000001">
    <property type="entry name" value="Glucose-6-phosphate isomerase"/>
    <property type="match status" value="1"/>
</dbReference>
<dbReference type="FunFam" id="3.40.50.10490:FF:000018">
    <property type="entry name" value="Glucose-6-phosphate isomerase"/>
    <property type="match status" value="1"/>
</dbReference>
<dbReference type="Gene3D" id="1.10.1390.10">
    <property type="match status" value="1"/>
</dbReference>
<dbReference type="Gene3D" id="3.40.50.10490">
    <property type="entry name" value="Glucose-6-phosphate isomerase like protein, domain 1"/>
    <property type="match status" value="2"/>
</dbReference>
<dbReference type="HAMAP" id="MF_00473">
    <property type="entry name" value="G6P_isomerase"/>
    <property type="match status" value="1"/>
</dbReference>
<dbReference type="InterPro" id="IPR001672">
    <property type="entry name" value="G6P_Isomerase"/>
</dbReference>
<dbReference type="InterPro" id="IPR023096">
    <property type="entry name" value="G6P_Isomerase_C"/>
</dbReference>
<dbReference type="InterPro" id="IPR018189">
    <property type="entry name" value="Phosphoglucose_isomerase_CS"/>
</dbReference>
<dbReference type="InterPro" id="IPR046348">
    <property type="entry name" value="SIS_dom_sf"/>
</dbReference>
<dbReference type="InterPro" id="IPR035476">
    <property type="entry name" value="SIS_PGI_1"/>
</dbReference>
<dbReference type="InterPro" id="IPR035482">
    <property type="entry name" value="SIS_PGI_2"/>
</dbReference>
<dbReference type="NCBIfam" id="NF001211">
    <property type="entry name" value="PRK00179.1"/>
    <property type="match status" value="1"/>
</dbReference>
<dbReference type="PANTHER" id="PTHR11469">
    <property type="entry name" value="GLUCOSE-6-PHOSPHATE ISOMERASE"/>
    <property type="match status" value="1"/>
</dbReference>
<dbReference type="PANTHER" id="PTHR11469:SF1">
    <property type="entry name" value="GLUCOSE-6-PHOSPHATE ISOMERASE"/>
    <property type="match status" value="1"/>
</dbReference>
<dbReference type="Pfam" id="PF00342">
    <property type="entry name" value="PGI"/>
    <property type="match status" value="1"/>
</dbReference>
<dbReference type="PRINTS" id="PR00662">
    <property type="entry name" value="G6PISOMERASE"/>
</dbReference>
<dbReference type="SUPFAM" id="SSF53697">
    <property type="entry name" value="SIS domain"/>
    <property type="match status" value="1"/>
</dbReference>
<dbReference type="PROSITE" id="PS00765">
    <property type="entry name" value="P_GLUCOSE_ISOMERASE_1"/>
    <property type="match status" value="1"/>
</dbReference>
<dbReference type="PROSITE" id="PS00174">
    <property type="entry name" value="P_GLUCOSE_ISOMERASE_2"/>
    <property type="match status" value="1"/>
</dbReference>
<dbReference type="PROSITE" id="PS51463">
    <property type="entry name" value="P_GLUCOSE_ISOMERASE_3"/>
    <property type="match status" value="1"/>
</dbReference>
<feature type="chain" id="PRO_1000125730" description="Glucose-6-phosphate isomerase">
    <location>
        <begin position="1"/>
        <end position="545"/>
    </location>
</feature>
<feature type="active site" description="Proton donor" evidence="1">
    <location>
        <position position="351"/>
    </location>
</feature>
<feature type="active site" evidence="1">
    <location>
        <position position="382"/>
    </location>
</feature>
<feature type="active site" evidence="1">
    <location>
        <position position="510"/>
    </location>
</feature>
<accession>B6JN06</accession>
<proteinExistence type="inferred from homology"/>
<protein>
    <recommendedName>
        <fullName evidence="1">Glucose-6-phosphate isomerase</fullName>
        <shortName evidence="1">GPI</shortName>
        <ecNumber evidence="1">5.3.1.9</ecNumber>
    </recommendedName>
    <alternativeName>
        <fullName evidence="1">Phosphoglucose isomerase</fullName>
        <shortName evidence="1">PGI</shortName>
    </alternativeName>
    <alternativeName>
        <fullName evidence="1">Phosphohexose isomerase</fullName>
        <shortName evidence="1">PHI</shortName>
    </alternativeName>
</protein>
<reference key="1">
    <citation type="submission" date="2008-10" db="EMBL/GenBank/DDBJ databases">
        <title>The complete genome sequence of Helicobacter pylori strain P12.</title>
        <authorList>
            <person name="Fischer W."/>
            <person name="Windhager L."/>
            <person name="Karnholz A."/>
            <person name="Zeiller M."/>
            <person name="Zimmer R."/>
            <person name="Haas R."/>
        </authorList>
    </citation>
    <scope>NUCLEOTIDE SEQUENCE [LARGE SCALE GENOMIC DNA]</scope>
    <source>
        <strain>P12</strain>
    </source>
</reference>
<evidence type="ECO:0000255" key="1">
    <source>
        <dbReference type="HAMAP-Rule" id="MF_00473"/>
    </source>
</evidence>
<name>G6PI_HELP2</name>
<gene>
    <name evidence="1" type="primary">pgi</name>
    <name type="ordered locus">HPP12_1132</name>
</gene>
<sequence>MLTQLKTYPKLLKHYEEIKEAHMRDWFSKDKERASRYFVQLESLSLDYSKNRLNDTTLKLLFELANDCSLKEKIEAMFKGEKINTTEKRAVLHTALRSLNDTEILLDNMEVLKSVRSVLKRMRAFSDSVRSGKRLGYTNQVITDIVNIGIGGSDLGALMVCTALKRYGHPRLKMHFVSNVDGTQILDVLEKINPASTLFIVASKTFSTQETLTNALTARKWFVERSGDEKHIAKHFVAVSTNKEAVQQFGIDEHNMFEFWDFVGGRYSLWSAIGLSIMIYLGKKNFNALLKGAYLMDEHFRNAPFESNLPVLMGLIGVWYINFFQSKSHLIAPYDQYLRHFPKFIQQLDMESNGKRISKKGETIPYDTCPVVWGDMGINAQHAFFQLLHQGTHLIPIDFIASLDKKPNAKGHHEILFSNVLAQAQAFMKGKSYEEALGELLFKGLDKDEAKDLAHHRVFFGNRPSNILLLEKISPSNIGALVALYEHKVFVQGVIWDINSFDQWGVELGKELAVPILQELEGHKSNAYFDSSTKHLIELYKNYNQ</sequence>
<comment type="function">
    <text evidence="1">Catalyzes the reversible isomerization of glucose-6-phosphate to fructose-6-phosphate.</text>
</comment>
<comment type="catalytic activity">
    <reaction evidence="1">
        <text>alpha-D-glucose 6-phosphate = beta-D-fructose 6-phosphate</text>
        <dbReference type="Rhea" id="RHEA:11816"/>
        <dbReference type="ChEBI" id="CHEBI:57634"/>
        <dbReference type="ChEBI" id="CHEBI:58225"/>
        <dbReference type="EC" id="5.3.1.9"/>
    </reaction>
</comment>
<comment type="pathway">
    <text evidence="1">Carbohydrate biosynthesis; gluconeogenesis.</text>
</comment>
<comment type="pathway">
    <text evidence="1">Carbohydrate degradation; glycolysis; D-glyceraldehyde 3-phosphate and glycerone phosphate from D-glucose: step 2/4.</text>
</comment>
<comment type="subcellular location">
    <subcellularLocation>
        <location evidence="1">Cytoplasm</location>
    </subcellularLocation>
</comment>
<comment type="similarity">
    <text evidence="1">Belongs to the GPI family.</text>
</comment>